<feature type="chain" id="PRO_1000203214" description="S-adenosylmethionine synthase">
    <location>
        <begin position="1"/>
        <end position="404"/>
    </location>
</feature>
<feature type="binding site" evidence="1">
    <location>
        <begin position="139"/>
        <end position="144"/>
    </location>
    <ligand>
        <name>ATP</name>
        <dbReference type="ChEBI" id="CHEBI:30616"/>
    </ligand>
</feature>
<accession>C3MZQ1</accession>
<comment type="function">
    <text evidence="1">Catalyzes the formation of S-adenosylmethionine from methionine and ATP.</text>
</comment>
<comment type="catalytic activity">
    <reaction evidence="1">
        <text>L-methionine + ATP + H2O = S-adenosyl-L-methionine + phosphate + diphosphate</text>
        <dbReference type="Rhea" id="RHEA:21080"/>
        <dbReference type="ChEBI" id="CHEBI:15377"/>
        <dbReference type="ChEBI" id="CHEBI:30616"/>
        <dbReference type="ChEBI" id="CHEBI:33019"/>
        <dbReference type="ChEBI" id="CHEBI:43474"/>
        <dbReference type="ChEBI" id="CHEBI:57844"/>
        <dbReference type="ChEBI" id="CHEBI:59789"/>
        <dbReference type="EC" id="2.5.1.6"/>
    </reaction>
</comment>
<comment type="cofactor">
    <cofactor evidence="1">
        <name>Mg(2+)</name>
        <dbReference type="ChEBI" id="CHEBI:18420"/>
    </cofactor>
</comment>
<comment type="pathway">
    <text evidence="1">Amino-acid biosynthesis; S-adenosyl-L-methionine biosynthesis; S-adenosyl-L-methionine from L-methionine: step 1/1.</text>
</comment>
<comment type="similarity">
    <text evidence="1">Belongs to the AdoMet synthase 2 family.</text>
</comment>
<protein>
    <recommendedName>
        <fullName evidence="1">S-adenosylmethionine synthase</fullName>
        <shortName evidence="1">AdoMet synthase</shortName>
        <ecNumber evidence="1">2.5.1.6</ecNumber>
    </recommendedName>
    <alternativeName>
        <fullName evidence="1">Methionine adenosyltransferase</fullName>
    </alternativeName>
</protein>
<organism>
    <name type="scientific">Saccharolobus islandicus (strain M.16.27)</name>
    <name type="common">Sulfolobus islandicus</name>
    <dbReference type="NCBI Taxonomy" id="427318"/>
    <lineage>
        <taxon>Archaea</taxon>
        <taxon>Thermoproteota</taxon>
        <taxon>Thermoprotei</taxon>
        <taxon>Sulfolobales</taxon>
        <taxon>Sulfolobaceae</taxon>
        <taxon>Saccharolobus</taxon>
    </lineage>
</organism>
<evidence type="ECO:0000255" key="1">
    <source>
        <dbReference type="HAMAP-Rule" id="MF_00136"/>
    </source>
</evidence>
<gene>
    <name evidence="1" type="primary">mat</name>
    <name type="ordered locus">M1627_2013</name>
</gene>
<reference key="1">
    <citation type="journal article" date="2009" name="Proc. Natl. Acad. Sci. U.S.A.">
        <title>Biogeography of the Sulfolobus islandicus pan-genome.</title>
        <authorList>
            <person name="Reno M.L."/>
            <person name="Held N.L."/>
            <person name="Fields C.J."/>
            <person name="Burke P.V."/>
            <person name="Whitaker R.J."/>
        </authorList>
    </citation>
    <scope>NUCLEOTIDE SEQUENCE [LARGE SCALE GENOMIC DNA]</scope>
    <source>
        <strain>M.16.27</strain>
    </source>
</reference>
<proteinExistence type="inferred from homology"/>
<dbReference type="EC" id="2.5.1.6" evidence="1"/>
<dbReference type="EMBL" id="CP001401">
    <property type="protein sequence ID" value="ACP55883.1"/>
    <property type="molecule type" value="Genomic_DNA"/>
</dbReference>
<dbReference type="RefSeq" id="WP_012711906.1">
    <property type="nucleotide sequence ID" value="NC_012632.1"/>
</dbReference>
<dbReference type="SMR" id="C3MZQ1"/>
<dbReference type="KEGG" id="sim:M1627_2013"/>
<dbReference type="HOGENOM" id="CLU_057642_0_0_2"/>
<dbReference type="UniPathway" id="UPA00315">
    <property type="reaction ID" value="UER00080"/>
</dbReference>
<dbReference type="Proteomes" id="UP000002307">
    <property type="component" value="Chromosome"/>
</dbReference>
<dbReference type="GO" id="GO:0005524">
    <property type="term" value="F:ATP binding"/>
    <property type="evidence" value="ECO:0007669"/>
    <property type="project" value="UniProtKB-UniRule"/>
</dbReference>
<dbReference type="GO" id="GO:0000287">
    <property type="term" value="F:magnesium ion binding"/>
    <property type="evidence" value="ECO:0007669"/>
    <property type="project" value="UniProtKB-UniRule"/>
</dbReference>
<dbReference type="GO" id="GO:0004478">
    <property type="term" value="F:methionine adenosyltransferase activity"/>
    <property type="evidence" value="ECO:0007669"/>
    <property type="project" value="UniProtKB-UniRule"/>
</dbReference>
<dbReference type="GO" id="GO:0006730">
    <property type="term" value="P:one-carbon metabolic process"/>
    <property type="evidence" value="ECO:0007669"/>
    <property type="project" value="UniProtKB-KW"/>
</dbReference>
<dbReference type="GO" id="GO:0006556">
    <property type="term" value="P:S-adenosylmethionine biosynthetic process"/>
    <property type="evidence" value="ECO:0007669"/>
    <property type="project" value="UniProtKB-UniRule"/>
</dbReference>
<dbReference type="Gene3D" id="3.30.300.10">
    <property type="match status" value="1"/>
</dbReference>
<dbReference type="Gene3D" id="3.30.300.280">
    <property type="entry name" value="S-adenosylmethionine synthetase, C-terminal domain"/>
    <property type="match status" value="2"/>
</dbReference>
<dbReference type="HAMAP" id="MF_00136">
    <property type="entry name" value="S_AdoMet_synth2"/>
    <property type="match status" value="1"/>
</dbReference>
<dbReference type="InterPro" id="IPR027790">
    <property type="entry name" value="AdoMet_synthase_2_family"/>
</dbReference>
<dbReference type="InterPro" id="IPR042544">
    <property type="entry name" value="AdoMet_synthase_3"/>
</dbReference>
<dbReference type="InterPro" id="IPR002795">
    <property type="entry name" value="S-AdoMet_synthetase_arc"/>
</dbReference>
<dbReference type="NCBIfam" id="NF003365">
    <property type="entry name" value="PRK04439.1-4"/>
    <property type="match status" value="1"/>
</dbReference>
<dbReference type="NCBIfam" id="NF003366">
    <property type="entry name" value="PRK04439.1-5"/>
    <property type="match status" value="1"/>
</dbReference>
<dbReference type="PANTHER" id="PTHR36697">
    <property type="entry name" value="S-ADENOSYLMETHIONINE SYNTHASE"/>
    <property type="match status" value="1"/>
</dbReference>
<dbReference type="PANTHER" id="PTHR36697:SF1">
    <property type="entry name" value="S-ADENOSYLMETHIONINE SYNTHASE"/>
    <property type="match status" value="1"/>
</dbReference>
<dbReference type="Pfam" id="PF01941">
    <property type="entry name" value="AdoMet_Synthase"/>
    <property type="match status" value="1"/>
</dbReference>
<keyword id="KW-0067">ATP-binding</keyword>
<keyword id="KW-0460">Magnesium</keyword>
<keyword id="KW-0547">Nucleotide-binding</keyword>
<keyword id="KW-0554">One-carbon metabolism</keyword>
<keyword id="KW-0808">Transferase</keyword>
<name>METK_SACI3</name>
<sequence>MRNINVQLNPLSDIEKLQVELVERKGLGHPDYIADAVAEEASRKLSLYYLKKYGVILHHNLDKTLVVGGQATPRFKGGDVIQPIYIVVAGRATTEVKTESGIEQIPVGTIIIESVKEWIRNNFRYLDAEKHLIVDYKIGKGSTDLVGIFEAGKRVPLSNDTSFGVGFAPFTKLEKLVYETERHLNSKQFKAKLPEVGEDIKVMGLRRGNEVDLTIAMATISELIEDVNHYINVKEQAKNEILDLASKIAPDYDVRIYVNTGDKIDKNILYLTVTGTSAEHGDDGMTGRGNRGVGLITPMRPMSLEATAGKNPVNHVGKLYNVLANLIANKIAQEVKDVKFSQVQVLGQIGRPIDDPLIANVDVITYDGKLNDETKNEISGIVDEMLSSFNKLTELILEGKATLF</sequence>